<accession>B3R2Y2</accession>
<feature type="chain" id="PRO_1000129645" description="Co-chaperonin GroES">
    <location>
        <begin position="1"/>
        <end position="96"/>
    </location>
</feature>
<protein>
    <recommendedName>
        <fullName evidence="1">Co-chaperonin GroES</fullName>
    </recommendedName>
    <alternativeName>
        <fullName evidence="1">10 kDa chaperonin</fullName>
    </alternativeName>
    <alternativeName>
        <fullName evidence="1">Chaperonin-10</fullName>
        <shortName evidence="1">Cpn10</shortName>
    </alternativeName>
</protein>
<organism>
    <name type="scientific">Cupriavidus taiwanensis (strain DSM 17343 / BCRC 17206 / CCUG 44338 / CIP 107171 / LMG 19424 / R1)</name>
    <name type="common">Ralstonia taiwanensis (strain LMG 19424)</name>
    <dbReference type="NCBI Taxonomy" id="977880"/>
    <lineage>
        <taxon>Bacteria</taxon>
        <taxon>Pseudomonadati</taxon>
        <taxon>Pseudomonadota</taxon>
        <taxon>Betaproteobacteria</taxon>
        <taxon>Burkholderiales</taxon>
        <taxon>Burkholderiaceae</taxon>
        <taxon>Cupriavidus</taxon>
    </lineage>
</organism>
<name>CH10_CUPTR</name>
<dbReference type="EMBL" id="CU633749">
    <property type="protein sequence ID" value="CAQ68663.1"/>
    <property type="molecule type" value="Genomic_DNA"/>
</dbReference>
<dbReference type="RefSeq" id="WP_008644494.1">
    <property type="nucleotide sequence ID" value="NC_010528.1"/>
</dbReference>
<dbReference type="SMR" id="B3R2Y2"/>
<dbReference type="GeneID" id="60824212"/>
<dbReference type="KEGG" id="cti:RALTA_A0685"/>
<dbReference type="eggNOG" id="COG0234">
    <property type="taxonomic scope" value="Bacteria"/>
</dbReference>
<dbReference type="HOGENOM" id="CLU_132825_1_0_4"/>
<dbReference type="BioCyc" id="CTAI977880:RALTA_RS03325-MONOMER"/>
<dbReference type="Proteomes" id="UP000001692">
    <property type="component" value="Chromosome 1"/>
</dbReference>
<dbReference type="GO" id="GO:0005737">
    <property type="term" value="C:cytoplasm"/>
    <property type="evidence" value="ECO:0007669"/>
    <property type="project" value="UniProtKB-SubCell"/>
</dbReference>
<dbReference type="GO" id="GO:0005524">
    <property type="term" value="F:ATP binding"/>
    <property type="evidence" value="ECO:0007669"/>
    <property type="project" value="InterPro"/>
</dbReference>
<dbReference type="GO" id="GO:0046872">
    <property type="term" value="F:metal ion binding"/>
    <property type="evidence" value="ECO:0007669"/>
    <property type="project" value="TreeGrafter"/>
</dbReference>
<dbReference type="GO" id="GO:0044183">
    <property type="term" value="F:protein folding chaperone"/>
    <property type="evidence" value="ECO:0007669"/>
    <property type="project" value="InterPro"/>
</dbReference>
<dbReference type="GO" id="GO:0051087">
    <property type="term" value="F:protein-folding chaperone binding"/>
    <property type="evidence" value="ECO:0007669"/>
    <property type="project" value="TreeGrafter"/>
</dbReference>
<dbReference type="GO" id="GO:0051082">
    <property type="term" value="F:unfolded protein binding"/>
    <property type="evidence" value="ECO:0007669"/>
    <property type="project" value="TreeGrafter"/>
</dbReference>
<dbReference type="GO" id="GO:0051085">
    <property type="term" value="P:chaperone cofactor-dependent protein refolding"/>
    <property type="evidence" value="ECO:0007669"/>
    <property type="project" value="TreeGrafter"/>
</dbReference>
<dbReference type="CDD" id="cd00320">
    <property type="entry name" value="cpn10"/>
    <property type="match status" value="1"/>
</dbReference>
<dbReference type="FunFam" id="2.30.33.40:FF:000001">
    <property type="entry name" value="10 kDa chaperonin"/>
    <property type="match status" value="1"/>
</dbReference>
<dbReference type="Gene3D" id="2.30.33.40">
    <property type="entry name" value="GroES chaperonin"/>
    <property type="match status" value="1"/>
</dbReference>
<dbReference type="HAMAP" id="MF_00580">
    <property type="entry name" value="CH10"/>
    <property type="match status" value="1"/>
</dbReference>
<dbReference type="InterPro" id="IPR020818">
    <property type="entry name" value="Chaperonin_GroES"/>
</dbReference>
<dbReference type="InterPro" id="IPR037124">
    <property type="entry name" value="Chaperonin_GroES_sf"/>
</dbReference>
<dbReference type="InterPro" id="IPR018369">
    <property type="entry name" value="Chaprnonin_Cpn10_CS"/>
</dbReference>
<dbReference type="InterPro" id="IPR011032">
    <property type="entry name" value="GroES-like_sf"/>
</dbReference>
<dbReference type="NCBIfam" id="NF001527">
    <property type="entry name" value="PRK00364.1-2"/>
    <property type="match status" value="1"/>
</dbReference>
<dbReference type="NCBIfam" id="NF001529">
    <property type="entry name" value="PRK00364.1-5"/>
    <property type="match status" value="1"/>
</dbReference>
<dbReference type="NCBIfam" id="NF001531">
    <property type="entry name" value="PRK00364.2-2"/>
    <property type="match status" value="1"/>
</dbReference>
<dbReference type="NCBIfam" id="NF001533">
    <property type="entry name" value="PRK00364.2-4"/>
    <property type="match status" value="1"/>
</dbReference>
<dbReference type="NCBIfam" id="NF001534">
    <property type="entry name" value="PRK00364.2-5"/>
    <property type="match status" value="1"/>
</dbReference>
<dbReference type="PANTHER" id="PTHR10772">
    <property type="entry name" value="10 KDA HEAT SHOCK PROTEIN"/>
    <property type="match status" value="1"/>
</dbReference>
<dbReference type="PANTHER" id="PTHR10772:SF58">
    <property type="entry name" value="CO-CHAPERONIN GROES"/>
    <property type="match status" value="1"/>
</dbReference>
<dbReference type="Pfam" id="PF00166">
    <property type="entry name" value="Cpn10"/>
    <property type="match status" value="1"/>
</dbReference>
<dbReference type="PRINTS" id="PR00297">
    <property type="entry name" value="CHAPERONIN10"/>
</dbReference>
<dbReference type="SMART" id="SM00883">
    <property type="entry name" value="Cpn10"/>
    <property type="match status" value="1"/>
</dbReference>
<dbReference type="SUPFAM" id="SSF50129">
    <property type="entry name" value="GroES-like"/>
    <property type="match status" value="1"/>
</dbReference>
<dbReference type="PROSITE" id="PS00681">
    <property type="entry name" value="CHAPERONINS_CPN10"/>
    <property type="match status" value="1"/>
</dbReference>
<reference key="1">
    <citation type="journal article" date="2008" name="Genome Res.">
        <title>Genome sequence of the beta-rhizobium Cupriavidus taiwanensis and comparative genomics of rhizobia.</title>
        <authorList>
            <person name="Amadou C."/>
            <person name="Pascal G."/>
            <person name="Mangenot S."/>
            <person name="Glew M."/>
            <person name="Bontemps C."/>
            <person name="Capela D."/>
            <person name="Carrere S."/>
            <person name="Cruveiller S."/>
            <person name="Dossat C."/>
            <person name="Lajus A."/>
            <person name="Marchetti M."/>
            <person name="Poinsot V."/>
            <person name="Rouy Z."/>
            <person name="Servin B."/>
            <person name="Saad M."/>
            <person name="Schenowitz C."/>
            <person name="Barbe V."/>
            <person name="Batut J."/>
            <person name="Medigue C."/>
            <person name="Masson-Boivin C."/>
        </authorList>
    </citation>
    <scope>NUCLEOTIDE SEQUENCE [LARGE SCALE GENOMIC DNA]</scope>
    <source>
        <strain>DSM 17343 / BCRC 17206 / CCUG 44338 / CIP 107171 / LMG 19424 / R1</strain>
    </source>
</reference>
<comment type="function">
    <text evidence="1">Together with the chaperonin GroEL, plays an essential role in assisting protein folding. The GroEL-GroES system forms a nano-cage that allows encapsulation of the non-native substrate proteins and provides a physical environment optimized to promote and accelerate protein folding. GroES binds to the apical surface of the GroEL ring, thereby capping the opening of the GroEL channel.</text>
</comment>
<comment type="subunit">
    <text evidence="1">Heptamer of 7 subunits arranged in a ring. Interacts with the chaperonin GroEL.</text>
</comment>
<comment type="subcellular location">
    <subcellularLocation>
        <location evidence="1">Cytoplasm</location>
    </subcellularLocation>
</comment>
<comment type="similarity">
    <text evidence="1">Belongs to the GroES chaperonin family.</text>
</comment>
<gene>
    <name evidence="1" type="primary">groES</name>
    <name evidence="1" type="synonym">groS</name>
    <name type="ordered locus">RALTA_A0685</name>
</gene>
<proteinExistence type="inferred from homology"/>
<evidence type="ECO:0000255" key="1">
    <source>
        <dbReference type="HAMAP-Rule" id="MF_00580"/>
    </source>
</evidence>
<sequence length="96" mass="10436">MNLRPLHDRVIVKRLDNETKTASGIVIPDNAAEKPDQGEVLAIGPGKKDDKGNNIALDVKVGDRVLFGKYAGQGVKVDGQELLVMREEDIMAVVNK</sequence>
<keyword id="KW-0143">Chaperone</keyword>
<keyword id="KW-0963">Cytoplasm</keyword>